<organism>
    <name type="scientific">Desulfovibrio desulfuricans (strain ATCC 27774 / DSM 6949 / MB)</name>
    <dbReference type="NCBI Taxonomy" id="525146"/>
    <lineage>
        <taxon>Bacteria</taxon>
        <taxon>Pseudomonadati</taxon>
        <taxon>Thermodesulfobacteriota</taxon>
        <taxon>Desulfovibrionia</taxon>
        <taxon>Desulfovibrionales</taxon>
        <taxon>Desulfovibrionaceae</taxon>
        <taxon>Desulfovibrio</taxon>
    </lineage>
</organism>
<evidence type="ECO:0000255" key="1">
    <source>
        <dbReference type="HAMAP-Rule" id="MF_01416"/>
    </source>
</evidence>
<protein>
    <recommendedName>
        <fullName evidence="1">ATP synthase subunit delta</fullName>
    </recommendedName>
    <alternativeName>
        <fullName evidence="1">ATP synthase F(1) sector subunit delta</fullName>
    </alternativeName>
    <alternativeName>
        <fullName evidence="1">F-type ATPase subunit delta</fullName>
        <shortName evidence="1">F-ATPase subunit delta</shortName>
    </alternativeName>
</protein>
<keyword id="KW-0066">ATP synthesis</keyword>
<keyword id="KW-0997">Cell inner membrane</keyword>
<keyword id="KW-1003">Cell membrane</keyword>
<keyword id="KW-0139">CF(1)</keyword>
<keyword id="KW-0375">Hydrogen ion transport</keyword>
<keyword id="KW-0406">Ion transport</keyword>
<keyword id="KW-0472">Membrane</keyword>
<keyword id="KW-0813">Transport</keyword>
<dbReference type="EMBL" id="CP001358">
    <property type="protein sequence ID" value="ACL50081.1"/>
    <property type="molecule type" value="Genomic_DNA"/>
</dbReference>
<dbReference type="SMR" id="B8J436"/>
<dbReference type="STRING" id="525146.Ddes_2185"/>
<dbReference type="KEGG" id="dds:Ddes_2185"/>
<dbReference type="eggNOG" id="COG0712">
    <property type="taxonomic scope" value="Bacteria"/>
</dbReference>
<dbReference type="HOGENOM" id="CLU_085114_4_1_7"/>
<dbReference type="GO" id="GO:0005886">
    <property type="term" value="C:plasma membrane"/>
    <property type="evidence" value="ECO:0007669"/>
    <property type="project" value="UniProtKB-SubCell"/>
</dbReference>
<dbReference type="GO" id="GO:0045259">
    <property type="term" value="C:proton-transporting ATP synthase complex"/>
    <property type="evidence" value="ECO:0007669"/>
    <property type="project" value="UniProtKB-KW"/>
</dbReference>
<dbReference type="GO" id="GO:0046933">
    <property type="term" value="F:proton-transporting ATP synthase activity, rotational mechanism"/>
    <property type="evidence" value="ECO:0007669"/>
    <property type="project" value="UniProtKB-UniRule"/>
</dbReference>
<dbReference type="Gene3D" id="1.10.520.20">
    <property type="entry name" value="N-terminal domain of the delta subunit of the F1F0-ATP synthase"/>
    <property type="match status" value="1"/>
</dbReference>
<dbReference type="HAMAP" id="MF_01416">
    <property type="entry name" value="ATP_synth_delta_bact"/>
    <property type="match status" value="1"/>
</dbReference>
<dbReference type="InterPro" id="IPR026015">
    <property type="entry name" value="ATP_synth_OSCP/delta_N_sf"/>
</dbReference>
<dbReference type="InterPro" id="IPR020781">
    <property type="entry name" value="ATPase_OSCP/d_CS"/>
</dbReference>
<dbReference type="InterPro" id="IPR000711">
    <property type="entry name" value="ATPase_OSCP/dsu"/>
</dbReference>
<dbReference type="NCBIfam" id="TIGR01145">
    <property type="entry name" value="ATP_synt_delta"/>
    <property type="match status" value="1"/>
</dbReference>
<dbReference type="PANTHER" id="PTHR11910">
    <property type="entry name" value="ATP SYNTHASE DELTA CHAIN"/>
    <property type="match status" value="1"/>
</dbReference>
<dbReference type="Pfam" id="PF00213">
    <property type="entry name" value="OSCP"/>
    <property type="match status" value="1"/>
</dbReference>
<dbReference type="PRINTS" id="PR00125">
    <property type="entry name" value="ATPASEDELTA"/>
</dbReference>
<dbReference type="SUPFAM" id="SSF47928">
    <property type="entry name" value="N-terminal domain of the delta subunit of the F1F0-ATP synthase"/>
    <property type="match status" value="1"/>
</dbReference>
<dbReference type="PROSITE" id="PS00389">
    <property type="entry name" value="ATPASE_DELTA"/>
    <property type="match status" value="1"/>
</dbReference>
<comment type="function">
    <text evidence="1">F(1)F(0) ATP synthase produces ATP from ADP in the presence of a proton or sodium gradient. F-type ATPases consist of two structural domains, F(1) containing the extramembraneous catalytic core and F(0) containing the membrane proton channel, linked together by a central stalk and a peripheral stalk. During catalysis, ATP synthesis in the catalytic domain of F(1) is coupled via a rotary mechanism of the central stalk subunits to proton translocation.</text>
</comment>
<comment type="function">
    <text evidence="1">This protein is part of the stalk that links CF(0) to CF(1). It either transmits conformational changes from CF(0) to CF(1) or is implicated in proton conduction.</text>
</comment>
<comment type="subunit">
    <text evidence="1">F-type ATPases have 2 components, F(1) - the catalytic core - and F(0) - the membrane proton channel. F(1) has five subunits: alpha(3), beta(3), gamma(1), delta(1), epsilon(1). F(0) has three main subunits: a(1), b(2) and c(10-14). The alpha and beta chains form an alternating ring which encloses part of the gamma chain. F(1) is attached to F(0) by a central stalk formed by the gamma and epsilon chains, while a peripheral stalk is formed by the delta and b chains.</text>
</comment>
<comment type="subcellular location">
    <subcellularLocation>
        <location evidence="1">Cell inner membrane</location>
        <topology evidence="1">Peripheral membrane protein</topology>
    </subcellularLocation>
</comment>
<comment type="similarity">
    <text evidence="1">Belongs to the ATPase delta chain family.</text>
</comment>
<reference key="1">
    <citation type="submission" date="2009-01" db="EMBL/GenBank/DDBJ databases">
        <title>Complete sequence of Desulfovibrio desulfuricans subsp. desulfuricans str. ATCC 27774.</title>
        <authorList>
            <consortium name="US DOE Joint Genome Institute"/>
            <person name="Lucas S."/>
            <person name="Copeland A."/>
            <person name="Lapidus A."/>
            <person name="Glavina del Rio T."/>
            <person name="Tice H."/>
            <person name="Bruce D."/>
            <person name="Goodwin L."/>
            <person name="Pitluck S."/>
            <person name="Sims D."/>
            <person name="Lu M."/>
            <person name="Kiss H."/>
            <person name="Meineke L."/>
            <person name="Brettin T."/>
            <person name="Detter J.C."/>
            <person name="Han C."/>
            <person name="Larimer F."/>
            <person name="Land M."/>
            <person name="Hauser L."/>
            <person name="Kyrpides N."/>
            <person name="Ovchinnikova G."/>
            <person name="Hazen T.C."/>
        </authorList>
    </citation>
    <scope>NUCLEOTIDE SEQUENCE [LARGE SCALE GENOMIC DNA]</scope>
    <source>
        <strain>ATCC 27774 / DSM 6949 / MB</strain>
    </source>
</reference>
<proteinExistence type="inferred from homology"/>
<name>ATPD_DESDA</name>
<feature type="chain" id="PRO_0000370965" description="ATP synthase subunit delta">
    <location>
        <begin position="1"/>
        <end position="183"/>
    </location>
</feature>
<accession>B8J436</accession>
<sequence length="183" mass="19828">MIDTVVARRYANAIFALGKKDGDDALSSRGECLAALGEALAAAPGLDMTLKSPVIGVEEKKAVLDKLLGKLKADQTMRSFCFLLADKERLAFLREISAWYGKLLDEAKGIVRGELVTAVKLSADKKAKLKESLEKKTGTALELTFAVDKDILGGMVLKMGDRVLDASLRAQLGILRETFKRGE</sequence>
<gene>
    <name evidence="1" type="primary">atpH</name>
    <name type="ordered locus">Ddes_2185</name>
</gene>